<dbReference type="EC" id="3.4.16.6"/>
<dbReference type="EMBL" id="AF095574">
    <property type="protein sequence ID" value="AAC64191.1"/>
    <property type="molecule type" value="Genomic_DNA"/>
</dbReference>
<dbReference type="SMR" id="O74702"/>
<dbReference type="ESTHER" id="picpa-KEX1">
    <property type="family name" value="Carboxypeptidase_S10"/>
</dbReference>
<dbReference type="MEROPS" id="S10.007"/>
<dbReference type="GlyCosmos" id="O74702">
    <property type="glycosylation" value="6 sites, No reported glycans"/>
</dbReference>
<dbReference type="GO" id="GO:0016020">
    <property type="term" value="C:membrane"/>
    <property type="evidence" value="ECO:0007669"/>
    <property type="project" value="UniProtKB-KW"/>
</dbReference>
<dbReference type="GO" id="GO:0005802">
    <property type="term" value="C:trans-Golgi network"/>
    <property type="evidence" value="ECO:0007669"/>
    <property type="project" value="TreeGrafter"/>
</dbReference>
<dbReference type="GO" id="GO:0004185">
    <property type="term" value="F:serine-type carboxypeptidase activity"/>
    <property type="evidence" value="ECO:0007669"/>
    <property type="project" value="UniProtKB-EC"/>
</dbReference>
<dbReference type="GO" id="GO:0006915">
    <property type="term" value="P:apoptotic process"/>
    <property type="evidence" value="ECO:0007669"/>
    <property type="project" value="UniProtKB-KW"/>
</dbReference>
<dbReference type="GO" id="GO:0006508">
    <property type="term" value="P:proteolysis"/>
    <property type="evidence" value="ECO:0007669"/>
    <property type="project" value="UniProtKB-KW"/>
</dbReference>
<dbReference type="Gene3D" id="3.40.50.1820">
    <property type="entry name" value="alpha/beta hydrolase"/>
    <property type="match status" value="1"/>
</dbReference>
<dbReference type="InterPro" id="IPR029058">
    <property type="entry name" value="AB_hydrolase_fold"/>
</dbReference>
<dbReference type="InterPro" id="IPR001563">
    <property type="entry name" value="Peptidase_S10"/>
</dbReference>
<dbReference type="InterPro" id="IPR018202">
    <property type="entry name" value="Ser_caboxypep_ser_AS"/>
</dbReference>
<dbReference type="PANTHER" id="PTHR11802:SF190">
    <property type="entry name" value="PHEROMONE-PROCESSING CARBOXYPEPTIDASE KEX1"/>
    <property type="match status" value="1"/>
</dbReference>
<dbReference type="PANTHER" id="PTHR11802">
    <property type="entry name" value="SERINE PROTEASE FAMILY S10 SERINE CARBOXYPEPTIDASE"/>
    <property type="match status" value="1"/>
</dbReference>
<dbReference type="Pfam" id="PF00450">
    <property type="entry name" value="Peptidase_S10"/>
    <property type="match status" value="1"/>
</dbReference>
<dbReference type="PRINTS" id="PR00724">
    <property type="entry name" value="CRBOXYPTASEC"/>
</dbReference>
<dbReference type="SUPFAM" id="SSF53474">
    <property type="entry name" value="alpha/beta-Hydrolases"/>
    <property type="match status" value="1"/>
</dbReference>
<dbReference type="PROSITE" id="PS00131">
    <property type="entry name" value="CARBOXYPEPT_SER_SER"/>
    <property type="match status" value="1"/>
</dbReference>
<accession>O74702</accession>
<sequence length="623" mass="70018">MLKLLCLLLPLVAVSASPIDLGSQKDYLVLDLPGLSHLSETQRPTMHAGLLPLNLSFVADDDTEYFFWRFSKQDVDRADIVFWLNGGPGCSSMDGALMELGPFVINPKQEVEYNEGTWVEAADVVFVDQPGGTGFSSTTNYLTELTEVADGFVTFLARYFHLFPADVYKKFTLGGESYAGQYVPYILKAIMDDLKSDSGQLPKELYLKGALIGNGWIDPNEQSLSYLEFFIKKELIDIHGSYMPGLLQQQEKCQNLINHSSGEASESQISYSACEKILNDALRFTRDKKAPLDQQCINMYDYTLRDTYPSCGMSWPPYLPDVTAFLQKKSVLEALHLDSSASWSECSARVGSHLKNKISVPSVDILPDLLQEIPIILFNGDHDIICNCIGTERMIDKLEFNGDQGFTEGTEYIPWFYNEVNVGKVISERNLTYVRVYNSSHMVPFDNTPVSRGLLDIYFDNFEDVEYNNVSGIATPVYDVDKNITYIDSNDPRLQNGPKSSSTDDSAAHGNPFFYYVFELFVIVLLLCGLVYLYQYYSNSAPHSILADKHKKKSKNKSKNVRFLDDLESNLDLDNTDDKKDNSVMSKLLSSMGYQAQEPYKPLDKGANADLDIEMDSHGTSEK</sequence>
<comment type="function">
    <text evidence="1 5">Protease with a carboxypeptidase B-like function involved in the C-terminal processing of the lysine and arginine residues from protein precursors. Promotes cell fusion and is involved in the programmed cell death (By similarity).</text>
</comment>
<comment type="catalytic activity">
    <reaction>
        <text>Preferential release of a C-terminal arginine or lysine residue.</text>
        <dbReference type="EC" id="3.4.16.6"/>
    </reaction>
</comment>
<comment type="subcellular location">
    <subcellularLocation>
        <location evidence="1">Golgi apparatus</location>
        <location evidence="1">trans-Golgi network membrane</location>
        <topology evidence="1">Single-pass type I membrane protein</topology>
    </subcellularLocation>
</comment>
<comment type="similarity">
    <text evidence="6">Belongs to the peptidase S10 family.</text>
</comment>
<name>KEX1_PICPA</name>
<organism>
    <name type="scientific">Komagataella pastoris</name>
    <name type="common">Yeast</name>
    <name type="synonym">Pichia pastoris</name>
    <dbReference type="NCBI Taxonomy" id="4922"/>
    <lineage>
        <taxon>Eukaryota</taxon>
        <taxon>Fungi</taxon>
        <taxon>Dikarya</taxon>
        <taxon>Ascomycota</taxon>
        <taxon>Saccharomycotina</taxon>
        <taxon>Pichiomycetes</taxon>
        <taxon>Pichiales</taxon>
        <taxon>Pichiaceae</taxon>
        <taxon>Komagataella</taxon>
    </lineage>
</organism>
<reference key="1">
    <citation type="journal article" date="1999" name="Yeast">
        <title>Disruption of the KEX1 gene in Pichia pastoris allows expression of full-length murine and human endostatin.</title>
        <authorList>
            <person name="Boehm T."/>
            <person name="Pirie-Shepherd S."/>
            <person name="Trinh L.B."/>
            <person name="Shiloach J."/>
            <person name="Folkman J."/>
        </authorList>
    </citation>
    <scope>NUCLEOTIDE SEQUENCE [GENOMIC DNA]</scope>
    <scope>FUNCTION</scope>
    <source>
        <strain>SMD1168</strain>
    </source>
</reference>
<keyword id="KW-0053">Apoptosis</keyword>
<keyword id="KW-0121">Carboxypeptidase</keyword>
<keyword id="KW-0325">Glycoprotein</keyword>
<keyword id="KW-0333">Golgi apparatus</keyword>
<keyword id="KW-0378">Hydrolase</keyword>
<keyword id="KW-0472">Membrane</keyword>
<keyword id="KW-0645">Protease</keyword>
<keyword id="KW-0732">Signal</keyword>
<keyword id="KW-0812">Transmembrane</keyword>
<keyword id="KW-1133">Transmembrane helix</keyword>
<evidence type="ECO:0000250" key="1"/>
<evidence type="ECO:0000255" key="2"/>
<evidence type="ECO:0000255" key="3">
    <source>
        <dbReference type="PROSITE-ProRule" id="PRU10074"/>
    </source>
</evidence>
<evidence type="ECO:0000256" key="4">
    <source>
        <dbReference type="SAM" id="MobiDB-lite"/>
    </source>
</evidence>
<evidence type="ECO:0000269" key="5">
    <source>
    </source>
</evidence>
<evidence type="ECO:0000305" key="6"/>
<protein>
    <recommendedName>
        <fullName>Pheromone-processing carboxypeptidase KEX1</fullName>
        <ecNumber>3.4.16.6</ecNumber>
    </recommendedName>
    <alternativeName>
        <fullName>Carboxypeptidase D</fullName>
    </alternativeName>
</protein>
<proteinExistence type="inferred from homology"/>
<gene>
    <name type="primary">KEX1</name>
</gene>
<feature type="signal peptide" evidence="2">
    <location>
        <begin position="1"/>
        <end position="16"/>
    </location>
</feature>
<feature type="chain" id="PRO_0000411939" description="Pheromone-processing carboxypeptidase KEX1">
    <location>
        <begin position="17"/>
        <end position="623"/>
    </location>
</feature>
<feature type="topological domain" description="Lumenal" evidence="2">
    <location>
        <begin position="17"/>
        <end position="512"/>
    </location>
</feature>
<feature type="transmembrane region" description="Helical" evidence="2">
    <location>
        <begin position="513"/>
        <end position="533"/>
    </location>
</feature>
<feature type="topological domain" description="Cytoplasmic" evidence="2">
    <location>
        <begin position="534"/>
        <end position="623"/>
    </location>
</feature>
<feature type="region of interest" description="Disordered" evidence="4">
    <location>
        <begin position="597"/>
        <end position="623"/>
    </location>
</feature>
<feature type="active site" evidence="3">
    <location>
        <position position="177"/>
    </location>
</feature>
<feature type="active site" evidence="3">
    <location>
        <position position="383"/>
    </location>
</feature>
<feature type="active site" evidence="3">
    <location>
        <position position="441"/>
    </location>
</feature>
<feature type="glycosylation site" description="N-linked (GlcNAc...) asparagine" evidence="2">
    <location>
        <position position="54"/>
    </location>
</feature>
<feature type="glycosylation site" description="N-linked (GlcNAc...) asparagine" evidence="2">
    <location>
        <position position="258"/>
    </location>
</feature>
<feature type="glycosylation site" description="N-linked (GlcNAc...) asparagine" evidence="2">
    <location>
        <position position="430"/>
    </location>
</feature>
<feature type="glycosylation site" description="N-linked (GlcNAc...) asparagine" evidence="2">
    <location>
        <position position="438"/>
    </location>
</feature>
<feature type="glycosylation site" description="N-linked (GlcNAc...) asparagine" evidence="2">
    <location>
        <position position="469"/>
    </location>
</feature>
<feature type="glycosylation site" description="N-linked (GlcNAc...) asparagine" evidence="2">
    <location>
        <position position="483"/>
    </location>
</feature>